<keyword id="KW-0067">ATP-binding</keyword>
<keyword id="KW-0547">Nucleotide-binding</keyword>
<keyword id="KW-0548">Nucleotidyltransferase</keyword>
<keyword id="KW-0808">Transferase</keyword>
<sequence>MTVSGDAIPPHGGTLVNRIASPEQAQELRSKAEHCPILHLDERAQSDLEMIAIGGFSPLTGFMGREDYQSVLETMHLANGLAWSLPVTLPVSAEIAADLKEGQTIALANAEGRLLGLLELTEKFTYDKTREAQQVYRTTDEQHPGVKVLYQQGSVYLAGPVTLLQRDPHPLFPAYQIDPAQSRQLFRERGWKTIVGFQTRNPIHRAHEYIQKCALEIVDGLFLHPLVGATKSDDIPAEVRMRCYEVLIEKYYPKERVILAINPAAMRYAGPREAIFHALVRKNYGCTHFIVGRDHAGVGNYYGPYDAQHIFDEFRPEELGIIPLKFEHAFYCTVTGTMATAKTSPSQPHQRIHLSGTKVREMLRRGEIPPPEFSRPEVAQLLAEAMRERGQPE</sequence>
<name>SAT_SYNJA</name>
<feature type="chain" id="PRO_0000340635" description="Sulfate adenylyltransferase">
    <location>
        <begin position="1"/>
        <end position="393"/>
    </location>
</feature>
<accession>Q2JU97</accession>
<evidence type="ECO:0000255" key="1">
    <source>
        <dbReference type="HAMAP-Rule" id="MF_00066"/>
    </source>
</evidence>
<reference key="1">
    <citation type="journal article" date="2007" name="ISME J.">
        <title>Population level functional diversity in a microbial community revealed by comparative genomic and metagenomic analyses.</title>
        <authorList>
            <person name="Bhaya D."/>
            <person name="Grossman A.R."/>
            <person name="Steunou A.-S."/>
            <person name="Khuri N."/>
            <person name="Cohan F.M."/>
            <person name="Hamamura N."/>
            <person name="Melendrez M.C."/>
            <person name="Bateson M.M."/>
            <person name="Ward D.M."/>
            <person name="Heidelberg J.F."/>
        </authorList>
    </citation>
    <scope>NUCLEOTIDE SEQUENCE [LARGE SCALE GENOMIC DNA]</scope>
    <source>
        <strain>JA-3-3Ab</strain>
    </source>
</reference>
<gene>
    <name evidence="1" type="primary">sat</name>
    <name type="ordered locus">CYA_1559</name>
</gene>
<organism>
    <name type="scientific">Synechococcus sp. (strain JA-3-3Ab)</name>
    <name type="common">Cyanobacteria bacterium Yellowstone A-Prime</name>
    <dbReference type="NCBI Taxonomy" id="321327"/>
    <lineage>
        <taxon>Bacteria</taxon>
        <taxon>Bacillati</taxon>
        <taxon>Cyanobacteriota</taxon>
        <taxon>Cyanophyceae</taxon>
        <taxon>Synechococcales</taxon>
        <taxon>Synechococcaceae</taxon>
        <taxon>Synechococcus</taxon>
    </lineage>
</organism>
<proteinExistence type="inferred from homology"/>
<dbReference type="EC" id="2.7.7.4" evidence="1"/>
<dbReference type="EMBL" id="CP000239">
    <property type="protein sequence ID" value="ABC99723.1"/>
    <property type="molecule type" value="Genomic_DNA"/>
</dbReference>
<dbReference type="RefSeq" id="WP_011430401.1">
    <property type="nucleotide sequence ID" value="NC_007775.1"/>
</dbReference>
<dbReference type="SMR" id="Q2JU97"/>
<dbReference type="STRING" id="321327.CYA_1559"/>
<dbReference type="KEGG" id="cya:CYA_1559"/>
<dbReference type="eggNOG" id="COG2046">
    <property type="taxonomic scope" value="Bacteria"/>
</dbReference>
<dbReference type="HOGENOM" id="CLU_022950_1_1_3"/>
<dbReference type="OrthoDB" id="9804504at2"/>
<dbReference type="UniPathway" id="UPA00140">
    <property type="reaction ID" value="UER00204"/>
</dbReference>
<dbReference type="Proteomes" id="UP000008818">
    <property type="component" value="Chromosome"/>
</dbReference>
<dbReference type="GO" id="GO:0005524">
    <property type="term" value="F:ATP binding"/>
    <property type="evidence" value="ECO:0007669"/>
    <property type="project" value="UniProtKB-KW"/>
</dbReference>
<dbReference type="GO" id="GO:0004781">
    <property type="term" value="F:sulfate adenylyltransferase (ATP) activity"/>
    <property type="evidence" value="ECO:0007669"/>
    <property type="project" value="UniProtKB-UniRule"/>
</dbReference>
<dbReference type="GO" id="GO:0070814">
    <property type="term" value="P:hydrogen sulfide biosynthetic process"/>
    <property type="evidence" value="ECO:0007669"/>
    <property type="project" value="UniProtKB-UniRule"/>
</dbReference>
<dbReference type="GO" id="GO:0000103">
    <property type="term" value="P:sulfate assimilation"/>
    <property type="evidence" value="ECO:0007669"/>
    <property type="project" value="UniProtKB-UniRule"/>
</dbReference>
<dbReference type="CDD" id="cd00517">
    <property type="entry name" value="ATPS"/>
    <property type="match status" value="1"/>
</dbReference>
<dbReference type="Gene3D" id="3.40.50.620">
    <property type="entry name" value="HUPs"/>
    <property type="match status" value="1"/>
</dbReference>
<dbReference type="Gene3D" id="3.10.400.10">
    <property type="entry name" value="Sulfate adenylyltransferase"/>
    <property type="match status" value="1"/>
</dbReference>
<dbReference type="HAMAP" id="MF_00066">
    <property type="entry name" value="Sulf_adenylyltr"/>
    <property type="match status" value="1"/>
</dbReference>
<dbReference type="InterPro" id="IPR025980">
    <property type="entry name" value="ATP-Sase_PUA-like_dom"/>
</dbReference>
<dbReference type="InterPro" id="IPR015947">
    <property type="entry name" value="PUA-like_sf"/>
</dbReference>
<dbReference type="InterPro" id="IPR014729">
    <property type="entry name" value="Rossmann-like_a/b/a_fold"/>
</dbReference>
<dbReference type="InterPro" id="IPR020792">
    <property type="entry name" value="SO4_adenylyltransferase_pro"/>
</dbReference>
<dbReference type="InterPro" id="IPR024951">
    <property type="entry name" value="Sulfurylase_cat_dom"/>
</dbReference>
<dbReference type="InterPro" id="IPR002650">
    <property type="entry name" value="Sulphate_adenylyltransferase"/>
</dbReference>
<dbReference type="NCBIfam" id="NF003166">
    <property type="entry name" value="PRK04149.1"/>
    <property type="match status" value="1"/>
</dbReference>
<dbReference type="NCBIfam" id="TIGR00339">
    <property type="entry name" value="sopT"/>
    <property type="match status" value="1"/>
</dbReference>
<dbReference type="PANTHER" id="PTHR43509">
    <property type="match status" value="1"/>
</dbReference>
<dbReference type="PANTHER" id="PTHR43509:SF1">
    <property type="entry name" value="SULFATE ADENYLYLTRANSFERASE"/>
    <property type="match status" value="1"/>
</dbReference>
<dbReference type="Pfam" id="PF01747">
    <property type="entry name" value="ATP-sulfurylase"/>
    <property type="match status" value="1"/>
</dbReference>
<dbReference type="Pfam" id="PF14306">
    <property type="entry name" value="PUA_2"/>
    <property type="match status" value="1"/>
</dbReference>
<dbReference type="SUPFAM" id="SSF52374">
    <property type="entry name" value="Nucleotidylyl transferase"/>
    <property type="match status" value="1"/>
</dbReference>
<dbReference type="SUPFAM" id="SSF88697">
    <property type="entry name" value="PUA domain-like"/>
    <property type="match status" value="1"/>
</dbReference>
<protein>
    <recommendedName>
        <fullName evidence="1">Sulfate adenylyltransferase</fullName>
        <ecNumber evidence="1">2.7.7.4</ecNumber>
    </recommendedName>
    <alternativeName>
        <fullName evidence="1">ATP-sulfurylase</fullName>
    </alternativeName>
    <alternativeName>
        <fullName evidence="1">Sulfate adenylate transferase</fullName>
        <shortName evidence="1">SAT</shortName>
    </alternativeName>
</protein>
<comment type="catalytic activity">
    <reaction evidence="1">
        <text>sulfate + ATP + H(+) = adenosine 5'-phosphosulfate + diphosphate</text>
        <dbReference type="Rhea" id="RHEA:18133"/>
        <dbReference type="ChEBI" id="CHEBI:15378"/>
        <dbReference type="ChEBI" id="CHEBI:16189"/>
        <dbReference type="ChEBI" id="CHEBI:30616"/>
        <dbReference type="ChEBI" id="CHEBI:33019"/>
        <dbReference type="ChEBI" id="CHEBI:58243"/>
        <dbReference type="EC" id="2.7.7.4"/>
    </reaction>
</comment>
<comment type="pathway">
    <text evidence="1">Sulfur metabolism; hydrogen sulfide biosynthesis; sulfite from sulfate: step 1/3.</text>
</comment>
<comment type="similarity">
    <text evidence="1">Belongs to the sulfate adenylyltransferase family.</text>
</comment>